<reference key="1">
    <citation type="journal article" date="2001" name="Plant Cell">
        <title>A novel family of magnesium transport genes in Arabidopsis.</title>
        <authorList>
            <person name="Li L."/>
            <person name="Tutone A.F."/>
            <person name="Drummond R.S."/>
            <person name="Gardner R.C."/>
            <person name="Luan S."/>
        </authorList>
    </citation>
    <scope>NUCLEOTIDE SEQUENCE [MRNA] (ISOFORM 1)</scope>
    <scope>GENE FAMILY</scope>
    <scope>TISSUE SPECIFICITY</scope>
    <source>
        <strain>cv. Landsberg erecta</strain>
    </source>
</reference>
<reference key="2">
    <citation type="journal article" date="2008" name="J. Integr. Plant Biol.">
        <title>AtMGT7: an Arabidopsis gene encoding a low-affinity magnesium transporter.</title>
        <authorList>
            <person name="Mao D.D."/>
            <person name="Tian L.F."/>
            <person name="Li L.G."/>
            <person name="Chen J."/>
            <person name="Deng P.Y."/>
            <person name="Li D.P."/>
            <person name="Luan S."/>
        </authorList>
    </citation>
    <scope>NUCLEOTIDE SEQUENCE [MRNA] (ISOFORMS 1 AND 4)</scope>
    <scope>FUNCTION</scope>
    <scope>TISSUE SPECIFICITY</scope>
    <source>
        <strain>cv. Columbia</strain>
    </source>
</reference>
<reference key="3">
    <citation type="journal article" date="1999" name="DNA Res.">
        <title>Structural analysis of Arabidopsis thaliana chromosome 5. IX. Sequence features of the regions of 1,011,550 bp covered by seventeen P1 and TAC clones.</title>
        <authorList>
            <person name="Kaneko T."/>
            <person name="Katoh T."/>
            <person name="Sato S."/>
            <person name="Nakamura Y."/>
            <person name="Asamizu E."/>
            <person name="Kotani H."/>
            <person name="Miyajima N."/>
            <person name="Tabata S."/>
        </authorList>
    </citation>
    <scope>NUCLEOTIDE SEQUENCE [LARGE SCALE GENOMIC DNA]</scope>
    <source>
        <strain>cv. Columbia</strain>
    </source>
</reference>
<reference key="4">
    <citation type="journal article" date="2000" name="Nature">
        <title>Sequence and analysis of chromosome 5 of the plant Arabidopsis thaliana.</title>
        <authorList>
            <person name="Tabata S."/>
            <person name="Kaneko T."/>
            <person name="Nakamura Y."/>
            <person name="Kotani H."/>
            <person name="Kato T."/>
            <person name="Asamizu E."/>
            <person name="Miyajima N."/>
            <person name="Sasamoto S."/>
            <person name="Kimura T."/>
            <person name="Hosouchi T."/>
            <person name="Kawashima K."/>
            <person name="Kohara M."/>
            <person name="Matsumoto M."/>
            <person name="Matsuno A."/>
            <person name="Muraki A."/>
            <person name="Nakayama S."/>
            <person name="Nakazaki N."/>
            <person name="Naruo K."/>
            <person name="Okumura S."/>
            <person name="Shinpo S."/>
            <person name="Takeuchi C."/>
            <person name="Wada T."/>
            <person name="Watanabe A."/>
            <person name="Yamada M."/>
            <person name="Yasuda M."/>
            <person name="Sato S."/>
            <person name="de la Bastide M."/>
            <person name="Huang E."/>
            <person name="Spiegel L."/>
            <person name="Gnoj L."/>
            <person name="O'Shaughnessy A."/>
            <person name="Preston R."/>
            <person name="Habermann K."/>
            <person name="Murray J."/>
            <person name="Johnson D."/>
            <person name="Rohlfing T."/>
            <person name="Nelson J."/>
            <person name="Stoneking T."/>
            <person name="Pepin K."/>
            <person name="Spieth J."/>
            <person name="Sekhon M."/>
            <person name="Armstrong J."/>
            <person name="Becker M."/>
            <person name="Belter E."/>
            <person name="Cordum H."/>
            <person name="Cordes M."/>
            <person name="Courtney L."/>
            <person name="Courtney W."/>
            <person name="Dante M."/>
            <person name="Du H."/>
            <person name="Edwards J."/>
            <person name="Fryman J."/>
            <person name="Haakensen B."/>
            <person name="Lamar E."/>
            <person name="Latreille P."/>
            <person name="Leonard S."/>
            <person name="Meyer R."/>
            <person name="Mulvaney E."/>
            <person name="Ozersky P."/>
            <person name="Riley A."/>
            <person name="Strowmatt C."/>
            <person name="Wagner-McPherson C."/>
            <person name="Wollam A."/>
            <person name="Yoakum M."/>
            <person name="Bell M."/>
            <person name="Dedhia N."/>
            <person name="Parnell L."/>
            <person name="Shah R."/>
            <person name="Rodriguez M."/>
            <person name="Hoon See L."/>
            <person name="Vil D."/>
            <person name="Baker J."/>
            <person name="Kirchoff K."/>
            <person name="Toth K."/>
            <person name="King L."/>
            <person name="Bahret A."/>
            <person name="Miller B."/>
            <person name="Marra M.A."/>
            <person name="Martienssen R."/>
            <person name="McCombie W.R."/>
            <person name="Wilson R.K."/>
            <person name="Murphy G."/>
            <person name="Bancroft I."/>
            <person name="Volckaert G."/>
            <person name="Wambutt R."/>
            <person name="Duesterhoeft A."/>
            <person name="Stiekema W."/>
            <person name="Pohl T."/>
            <person name="Entian K.-D."/>
            <person name="Terryn N."/>
            <person name="Hartley N."/>
            <person name="Bent E."/>
            <person name="Johnson S."/>
            <person name="Langham S.-A."/>
            <person name="McCullagh B."/>
            <person name="Robben J."/>
            <person name="Grymonprez B."/>
            <person name="Zimmermann W."/>
            <person name="Ramsperger U."/>
            <person name="Wedler H."/>
            <person name="Balke K."/>
            <person name="Wedler E."/>
            <person name="Peters S."/>
            <person name="van Staveren M."/>
            <person name="Dirkse W."/>
            <person name="Mooijman P."/>
            <person name="Klein Lankhorst R."/>
            <person name="Weitzenegger T."/>
            <person name="Bothe G."/>
            <person name="Rose M."/>
            <person name="Hauf J."/>
            <person name="Berneiser S."/>
            <person name="Hempel S."/>
            <person name="Feldpausch M."/>
            <person name="Lamberth S."/>
            <person name="Villarroel R."/>
            <person name="Gielen J."/>
            <person name="Ardiles W."/>
            <person name="Bents O."/>
            <person name="Lemcke K."/>
            <person name="Kolesov G."/>
            <person name="Mayer K.F.X."/>
            <person name="Rudd S."/>
            <person name="Schoof H."/>
            <person name="Schueller C."/>
            <person name="Zaccaria P."/>
            <person name="Mewes H.-W."/>
            <person name="Bevan M."/>
            <person name="Fransz P.F."/>
        </authorList>
    </citation>
    <scope>NUCLEOTIDE SEQUENCE [LARGE SCALE GENOMIC DNA]</scope>
    <source>
        <strain>cv. Columbia</strain>
    </source>
</reference>
<reference key="5">
    <citation type="journal article" date="2017" name="Plant J.">
        <title>Araport11: a complete reannotation of the Arabidopsis thaliana reference genome.</title>
        <authorList>
            <person name="Cheng C.Y."/>
            <person name="Krishnakumar V."/>
            <person name="Chan A.P."/>
            <person name="Thibaud-Nissen F."/>
            <person name="Schobel S."/>
            <person name="Town C.D."/>
        </authorList>
    </citation>
    <scope>GENOME REANNOTATION</scope>
    <source>
        <strain>cv. Columbia</strain>
    </source>
</reference>
<reference key="6">
    <citation type="journal article" date="2004" name="Genome Res.">
        <title>Whole genome sequence comparisons and 'full-length' cDNA sequences: a combined approach to evaluate and improve Arabidopsis genome annotation.</title>
        <authorList>
            <person name="Castelli V."/>
            <person name="Aury J.-M."/>
            <person name="Jaillon O."/>
            <person name="Wincker P."/>
            <person name="Clepet C."/>
            <person name="Menard M."/>
            <person name="Cruaud C."/>
            <person name="Quetier F."/>
            <person name="Scarpelli C."/>
            <person name="Schaechter V."/>
            <person name="Temple G."/>
            <person name="Caboche M."/>
            <person name="Weissenbach J."/>
            <person name="Salanoubat M."/>
        </authorList>
    </citation>
    <scope>NUCLEOTIDE SEQUENCE [LARGE SCALE MRNA] (ISOFORM 2)</scope>
    <source>
        <strain>cv. Columbia</strain>
    </source>
</reference>
<reference key="7">
    <citation type="submission" date="2006-07" db="EMBL/GenBank/DDBJ databases">
        <title>Large-scale analysis of RIKEN Arabidopsis full-length (RAFL) cDNAs.</title>
        <authorList>
            <person name="Totoki Y."/>
            <person name="Seki M."/>
            <person name="Ishida J."/>
            <person name="Nakajima M."/>
            <person name="Enju A."/>
            <person name="Kamiya A."/>
            <person name="Narusaka M."/>
            <person name="Shin-i T."/>
            <person name="Nakagawa M."/>
            <person name="Sakamoto N."/>
            <person name="Oishi K."/>
            <person name="Kohara Y."/>
            <person name="Kobayashi M."/>
            <person name="Toyoda A."/>
            <person name="Sakaki Y."/>
            <person name="Sakurai T."/>
            <person name="Iida K."/>
            <person name="Akiyama K."/>
            <person name="Satou M."/>
            <person name="Toyoda T."/>
            <person name="Konagaya A."/>
            <person name="Carninci P."/>
            <person name="Kawai J."/>
            <person name="Hayashizaki Y."/>
            <person name="Shinozaki K."/>
        </authorList>
    </citation>
    <scope>NUCLEOTIDE SEQUENCE [LARGE SCALE MRNA] (ISOFORM 3)</scope>
    <source>
        <strain>cv. Columbia</strain>
    </source>
</reference>
<reference key="8">
    <citation type="journal article" date="2009" name="Plant Cell">
        <title>A root-expressed magnesium transporter of the MRS2/MGT gene family in Arabidopsis thaliana allows for growth in low-Mg2+ environments.</title>
        <authorList>
            <person name="Gebert M."/>
            <person name="Meschenmoser K."/>
            <person name="Svidova S."/>
            <person name="Weghuber J."/>
            <person name="Schweyen R."/>
            <person name="Eifler K."/>
            <person name="Lenz H."/>
            <person name="Weyand K."/>
            <person name="Knoop V."/>
        </authorList>
    </citation>
    <scope>GENE FAMILY</scope>
    <scope>NOMENCLATURE</scope>
    <scope>TISSUE SPECIFICITY</scope>
    <scope>SUBCELLULAR LOCATION</scope>
    <scope>DISRUPTION PHENOTYPE</scope>
</reference>
<feature type="chain" id="PRO_0000394171" description="Magnesium transporter MRS2-7">
    <location>
        <begin position="1"/>
        <end position="386"/>
    </location>
</feature>
<feature type="transmembrane region" description="Helical" evidence="1">
    <location>
        <begin position="321"/>
        <end position="341"/>
    </location>
</feature>
<feature type="transmembrane region" description="Helical" evidence="1">
    <location>
        <begin position="355"/>
        <end position="375"/>
    </location>
</feature>
<feature type="short sequence motif" description="Required for magnesium transport activity">
    <location>
        <begin position="341"/>
        <end position="343"/>
    </location>
</feature>
<feature type="splice variant" id="VSP_039192" description="In isoform 2." evidence="5">
    <original>M</original>
    <variation>MALGLSSEESEM</variation>
    <location>
        <position position="1"/>
    </location>
</feature>
<feature type="splice variant" id="VSP_039193" description="In isoform 4." evidence="6">
    <location>
        <begin position="278"/>
        <end position="292"/>
    </location>
</feature>
<feature type="splice variant" id="VSP_039194" description="In isoform 3." evidence="7">
    <original>LELMLSAGT</original>
    <variation>EPSVYQCTL</variation>
    <location>
        <begin position="319"/>
        <end position="327"/>
    </location>
</feature>
<feature type="splice variant" id="VSP_039195" description="In isoform 3." evidence="7">
    <location>
        <begin position="328"/>
        <end position="386"/>
    </location>
</feature>
<feature type="sequence conflict" description="In Ref. 1; AAN73217." evidence="8" ref="1">
    <original>AHGV</original>
    <variation>EHGA</variation>
    <location>
        <begin position="122"/>
        <end position="125"/>
    </location>
</feature>
<feature type="sequence conflict" description="In Ref. 1; AAN73217." evidence="8" ref="1">
    <original>L</original>
    <variation>V</variation>
    <location>
        <position position="131"/>
    </location>
</feature>
<feature type="sequence conflict" description="In Ref. 1; AAN73217." evidence="8" ref="1">
    <original>F</original>
    <variation>S</variation>
    <location>
        <position position="165"/>
    </location>
</feature>
<feature type="sequence conflict" description="In Ref. 1; AAN73217." evidence="8" ref="1">
    <original>VSLV</original>
    <variation>MSLA</variation>
    <location>
        <begin position="257"/>
        <end position="260"/>
    </location>
</feature>
<dbReference type="EMBL" id="AY150292">
    <property type="protein sequence ID" value="AAN73217.1"/>
    <property type="molecule type" value="mRNA"/>
</dbReference>
<dbReference type="EMBL" id="DQ408372">
    <property type="protein sequence ID" value="ABD64135.2"/>
    <property type="molecule type" value="mRNA"/>
</dbReference>
<dbReference type="EMBL" id="DQ408373">
    <property type="protein sequence ID" value="ABD64136.3"/>
    <property type="molecule type" value="mRNA"/>
</dbReference>
<dbReference type="EMBL" id="AB020752">
    <property type="protein sequence ID" value="BAB09524.1"/>
    <property type="status" value="ALT_SEQ"/>
    <property type="molecule type" value="Genomic_DNA"/>
</dbReference>
<dbReference type="EMBL" id="AL353994">
    <property type="protein sequence ID" value="CAB89361.1"/>
    <property type="status" value="ALT_SEQ"/>
    <property type="molecule type" value="Genomic_DNA"/>
</dbReference>
<dbReference type="EMBL" id="CP002688">
    <property type="protein sequence ID" value="AED91431.1"/>
    <property type="molecule type" value="Genomic_DNA"/>
</dbReference>
<dbReference type="EMBL" id="CP002688">
    <property type="protein sequence ID" value="AED91432.1"/>
    <property type="molecule type" value="Genomic_DNA"/>
</dbReference>
<dbReference type="EMBL" id="CP002688">
    <property type="protein sequence ID" value="AED91433.1"/>
    <property type="molecule type" value="Genomic_DNA"/>
</dbReference>
<dbReference type="EMBL" id="CP002688">
    <property type="protein sequence ID" value="AED91434.1"/>
    <property type="molecule type" value="Genomic_DNA"/>
</dbReference>
<dbReference type="EMBL" id="BX831230">
    <property type="status" value="NOT_ANNOTATED_CDS"/>
    <property type="molecule type" value="mRNA"/>
</dbReference>
<dbReference type="EMBL" id="AK228287">
    <property type="protein sequence ID" value="BAF00233.1"/>
    <property type="molecule type" value="mRNA"/>
</dbReference>
<dbReference type="PIR" id="T49929">
    <property type="entry name" value="T49929"/>
</dbReference>
<dbReference type="RefSeq" id="NP_001078557.1">
    <molecule id="Q304A0-4"/>
    <property type="nucleotide sequence ID" value="NM_001085088.1"/>
</dbReference>
<dbReference type="RefSeq" id="NP_196531.2">
    <molecule id="Q304A0-1"/>
    <property type="nucleotide sequence ID" value="NM_121006.4"/>
</dbReference>
<dbReference type="RefSeq" id="NP_850802.2">
    <molecule id="Q304A0-2"/>
    <property type="nucleotide sequence ID" value="NM_180471.3"/>
</dbReference>
<dbReference type="RefSeq" id="NP_974757.2">
    <molecule id="Q304A0-3"/>
    <property type="nucleotide sequence ID" value="NM_203028.3"/>
</dbReference>
<dbReference type="SMR" id="Q304A0"/>
<dbReference type="BioGRID" id="16106">
    <property type="interactions" value="2"/>
</dbReference>
<dbReference type="FunCoup" id="Q304A0">
    <property type="interactions" value="565"/>
</dbReference>
<dbReference type="IntAct" id="Q304A0">
    <property type="interactions" value="2"/>
</dbReference>
<dbReference type="STRING" id="3702.Q304A0"/>
<dbReference type="iPTMnet" id="Q304A0"/>
<dbReference type="PaxDb" id="3702-AT5G09690.2"/>
<dbReference type="ProteomicsDB" id="250869">
    <molecule id="Q304A0-1"/>
</dbReference>
<dbReference type="EnsemblPlants" id="AT5G09690.1">
    <molecule id="Q304A0-1"/>
    <property type="protein sequence ID" value="AT5G09690.1"/>
    <property type="gene ID" value="AT5G09690"/>
</dbReference>
<dbReference type="EnsemblPlants" id="AT5G09690.2">
    <molecule id="Q304A0-2"/>
    <property type="protein sequence ID" value="AT5G09690.2"/>
    <property type="gene ID" value="AT5G09690"/>
</dbReference>
<dbReference type="EnsemblPlants" id="AT5G09690.3">
    <molecule id="Q304A0-3"/>
    <property type="protein sequence ID" value="AT5G09690.3"/>
    <property type="gene ID" value="AT5G09690"/>
</dbReference>
<dbReference type="EnsemblPlants" id="AT5G09690.4">
    <molecule id="Q304A0-4"/>
    <property type="protein sequence ID" value="AT5G09690.4"/>
    <property type="gene ID" value="AT5G09690"/>
</dbReference>
<dbReference type="GeneID" id="830828"/>
<dbReference type="Gramene" id="AT5G09690.1">
    <molecule id="Q304A0-1"/>
    <property type="protein sequence ID" value="AT5G09690.1"/>
    <property type="gene ID" value="AT5G09690"/>
</dbReference>
<dbReference type="Gramene" id="AT5G09690.2">
    <molecule id="Q304A0-2"/>
    <property type="protein sequence ID" value="AT5G09690.2"/>
    <property type="gene ID" value="AT5G09690"/>
</dbReference>
<dbReference type="Gramene" id="AT5G09690.3">
    <molecule id="Q304A0-3"/>
    <property type="protein sequence ID" value="AT5G09690.3"/>
    <property type="gene ID" value="AT5G09690"/>
</dbReference>
<dbReference type="Gramene" id="AT5G09690.4">
    <molecule id="Q304A0-4"/>
    <property type="protein sequence ID" value="AT5G09690.4"/>
    <property type="gene ID" value="AT5G09690"/>
</dbReference>
<dbReference type="KEGG" id="ath:AT5G09690"/>
<dbReference type="Araport" id="AT5G09690"/>
<dbReference type="TAIR" id="AT5G09690">
    <property type="gene designation" value="MGT7"/>
</dbReference>
<dbReference type="eggNOG" id="KOG2662">
    <property type="taxonomic scope" value="Eukaryota"/>
</dbReference>
<dbReference type="InParanoid" id="Q304A0"/>
<dbReference type="PhylomeDB" id="Q304A0"/>
<dbReference type="PRO" id="PR:Q304A0"/>
<dbReference type="Proteomes" id="UP000006548">
    <property type="component" value="Chromosome 5"/>
</dbReference>
<dbReference type="ExpressionAtlas" id="Q304A0">
    <property type="expression patterns" value="baseline and differential"/>
</dbReference>
<dbReference type="GO" id="GO:0005789">
    <property type="term" value="C:endoplasmic reticulum membrane"/>
    <property type="evidence" value="ECO:0007669"/>
    <property type="project" value="UniProtKB-SubCell"/>
</dbReference>
<dbReference type="GO" id="GO:0015095">
    <property type="term" value="F:magnesium ion transmembrane transporter activity"/>
    <property type="evidence" value="ECO:0000314"/>
    <property type="project" value="TAIR"/>
</dbReference>
<dbReference type="CDD" id="cd12823">
    <property type="entry name" value="Mrs2_Mfm1p-like"/>
    <property type="match status" value="1"/>
</dbReference>
<dbReference type="FunFam" id="2.40.128.330:FF:000001">
    <property type="entry name" value="Magnesium transporter MRS2-1"/>
    <property type="match status" value="1"/>
</dbReference>
<dbReference type="Gene3D" id="2.40.128.330">
    <property type="match status" value="1"/>
</dbReference>
<dbReference type="Gene3D" id="1.20.58.340">
    <property type="entry name" value="Magnesium transport protein CorA, transmembrane region"/>
    <property type="match status" value="2"/>
</dbReference>
<dbReference type="InterPro" id="IPR045863">
    <property type="entry name" value="CorA_TM1_TM2"/>
</dbReference>
<dbReference type="InterPro" id="IPR039204">
    <property type="entry name" value="MRS2-like"/>
</dbReference>
<dbReference type="PANTHER" id="PTHR13890:SF38">
    <property type="entry name" value="MAGNESIUM TRANSPORTER MRS2-7-RELATED"/>
    <property type="match status" value="1"/>
</dbReference>
<dbReference type="PANTHER" id="PTHR13890">
    <property type="entry name" value="RNA SPLICING PROTEIN MRS2, MITOCHONDRIAL"/>
    <property type="match status" value="1"/>
</dbReference>
<dbReference type="Pfam" id="PF22099">
    <property type="entry name" value="MRS2-like"/>
    <property type="match status" value="2"/>
</dbReference>
<dbReference type="SUPFAM" id="SSF144083">
    <property type="entry name" value="Magnesium transport protein CorA, transmembrane region"/>
    <property type="match status" value="1"/>
</dbReference>
<proteinExistence type="evidence at transcript level"/>
<accession>Q304A0</accession>
<accession>Q0WRL6</accession>
<accession>Q206Z2</accession>
<accession>Q303Z9</accession>
<accession>Q3E9J2</accession>
<accession>Q8H1G8</accession>
<accession>Q9FXX5</accession>
<accession>Q9LXD2</accession>
<gene>
    <name type="primary">MRS2-7</name>
    <name type="synonym">MGT7</name>
    <name type="ordered locus">At5g09690</name>
    <name type="ORF">F17I14.120</name>
</gene>
<sequence length="386" mass="43431">MSPDGELVPVDSSAVVTAKRKTSQLSRSWISIDATGQKTVLDVDKHVIMHRVQIHARDLRILDPNLFYPSAILGRERAIVLNLEHIKAIITAEEVLIRDSSDENVIPVLEEFQRRLPVGNEAHGVHGDGDLGEEDESPFEFRALEVALEAICSFLAARTTELEKFAYPALDELTLKISSRNLERVRKLKSAMTRLTARVQKVRDELEQLLDDDGDMADLYLTRKLVGASSSVSVSDEPIWYPTSPTIGSMISRASRVSLVTVRGDDETDVEELEMLLEAYFMQIDSTLNKLTELREYIDDTEDYINIQLDNHRNQLIQLELMLSAGTVCVSVYSMIAGIFGMNIPNTWNHDHGYIFKWVVSLTGTFCIVLFVIILSYARFRGLIGS</sequence>
<keyword id="KW-0025">Alternative splicing</keyword>
<keyword id="KW-0256">Endoplasmic reticulum</keyword>
<keyword id="KW-0406">Ion transport</keyword>
<keyword id="KW-0460">Magnesium</keyword>
<keyword id="KW-0472">Membrane</keyword>
<keyword id="KW-1185">Reference proteome</keyword>
<keyword id="KW-0812">Transmembrane</keyword>
<keyword id="KW-1133">Transmembrane helix</keyword>
<keyword id="KW-0813">Transport</keyword>
<protein>
    <recommendedName>
        <fullName>Magnesium transporter MRS2-7</fullName>
    </recommendedName>
    <alternativeName>
        <fullName>Magnesium Transporter 7</fullName>
        <shortName>AtMGT7</shortName>
    </alternativeName>
</protein>
<comment type="function">
    <text evidence="3">Low-affinity magnesium transporter that mediates the influx of magnesium.</text>
</comment>
<comment type="subcellular location">
    <subcellularLocation>
        <location evidence="4">Endoplasmic reticulum membrane</location>
        <topology evidence="4">Multi-pass membrane protein</topology>
    </subcellularLocation>
</comment>
<comment type="alternative products">
    <event type="alternative splicing"/>
    <isoform>
        <id>Q304A0-1</id>
        <name>1</name>
        <name>MGT7a</name>
        <sequence type="displayed"/>
    </isoform>
    <isoform>
        <id>Q304A0-2</id>
        <name>2</name>
        <sequence type="described" ref="VSP_039192"/>
    </isoform>
    <isoform>
        <id>Q304A0-3</id>
        <name>3</name>
        <sequence type="described" ref="VSP_039194 VSP_039195"/>
    </isoform>
    <isoform>
        <id>Q304A0-4</id>
        <name>4</name>
        <name>MGT7b</name>
        <sequence type="described" ref="VSP_039193"/>
    </isoform>
</comment>
<comment type="tissue specificity">
    <text evidence="2 3 4">Isoform 1 is expressed in the whole plant. Isoform 4 is expressed only in roots and flowers.</text>
</comment>
<comment type="disruption phenotype">
    <text evidence="4">Displays plantlets with retarded development under low Mg(2+) concentrations growth conditions.</text>
</comment>
<comment type="miscellaneous">
    <text>Has the ability to complement mutants in Salmonella enterica and yeast lacking magnesium transport capability.</text>
</comment>
<comment type="similarity">
    <text evidence="8">Belongs to the CorA metal ion transporter (MIT) (TC 1.A.35.5) family.</text>
</comment>
<comment type="sequence caution" evidence="8">
    <conflict type="erroneous gene model prediction">
        <sequence resource="EMBL-CDS" id="BAB09524"/>
    </conflict>
</comment>
<comment type="sequence caution" evidence="8">
    <conflict type="miscellaneous discrepancy">
        <sequence resource="EMBL" id="BX831230"/>
    </conflict>
    <text>Sequencing errors.</text>
</comment>
<comment type="sequence caution" evidence="8">
    <conflict type="erroneous gene model prediction">
        <sequence resource="EMBL-CDS" id="CAB89361"/>
    </conflict>
</comment>
<name>MRS27_ARATH</name>
<organism>
    <name type="scientific">Arabidopsis thaliana</name>
    <name type="common">Mouse-ear cress</name>
    <dbReference type="NCBI Taxonomy" id="3702"/>
    <lineage>
        <taxon>Eukaryota</taxon>
        <taxon>Viridiplantae</taxon>
        <taxon>Streptophyta</taxon>
        <taxon>Embryophyta</taxon>
        <taxon>Tracheophyta</taxon>
        <taxon>Spermatophyta</taxon>
        <taxon>Magnoliopsida</taxon>
        <taxon>eudicotyledons</taxon>
        <taxon>Gunneridae</taxon>
        <taxon>Pentapetalae</taxon>
        <taxon>rosids</taxon>
        <taxon>malvids</taxon>
        <taxon>Brassicales</taxon>
        <taxon>Brassicaceae</taxon>
        <taxon>Camelineae</taxon>
        <taxon>Arabidopsis</taxon>
    </lineage>
</organism>
<evidence type="ECO:0000255" key="1"/>
<evidence type="ECO:0000269" key="2">
    <source>
    </source>
</evidence>
<evidence type="ECO:0000269" key="3">
    <source>
    </source>
</evidence>
<evidence type="ECO:0000269" key="4">
    <source>
    </source>
</evidence>
<evidence type="ECO:0000303" key="5">
    <source>
    </source>
</evidence>
<evidence type="ECO:0000303" key="6">
    <source>
    </source>
</evidence>
<evidence type="ECO:0000303" key="7">
    <source ref="7"/>
</evidence>
<evidence type="ECO:0000305" key="8"/>